<organism>
    <name type="scientific">Arabidopsis thaliana</name>
    <name type="common">Mouse-ear cress</name>
    <dbReference type="NCBI Taxonomy" id="3702"/>
    <lineage>
        <taxon>Eukaryota</taxon>
        <taxon>Viridiplantae</taxon>
        <taxon>Streptophyta</taxon>
        <taxon>Embryophyta</taxon>
        <taxon>Tracheophyta</taxon>
        <taxon>Spermatophyta</taxon>
        <taxon>Magnoliopsida</taxon>
        <taxon>eudicotyledons</taxon>
        <taxon>Gunneridae</taxon>
        <taxon>Pentapetalae</taxon>
        <taxon>rosids</taxon>
        <taxon>malvids</taxon>
        <taxon>Brassicales</taxon>
        <taxon>Brassicaceae</taxon>
        <taxon>Camelineae</taxon>
        <taxon>Arabidopsis</taxon>
    </lineage>
</organism>
<sequence length="146" mass="16450">MGRSIFSFFTKKKKMAMARSISYITSTQLLPLHRRPNIAIIDVRDEERNYDGHIAGSLHYASGSFDDKISHLVQNVKDKDTLVFHCALSQVRGPTCARRLVNYLDEKKEDTGIKNIMILERGFNGWEASGKPVCRCAEVPCKGDCA</sequence>
<proteinExistence type="evidence at protein level"/>
<feature type="chain" id="PRO_0000198663" description="Dual specificity phosphatase Cdc25">
    <location>
        <begin position="1"/>
        <end position="146"/>
    </location>
</feature>
<feature type="domain" description="Rhodanese" evidence="1">
    <location>
        <begin position="34"/>
        <end position="135"/>
    </location>
</feature>
<feature type="active site" description="Cysteine persulfide intermediate" evidence="1">
    <location>
        <position position="86"/>
    </location>
</feature>
<feature type="binding site">
    <location>
        <begin position="45"/>
        <end position="48"/>
    </location>
    <ligand>
        <name>substrate</name>
    </ligand>
</feature>
<feature type="binding site" evidence="2 3">
    <location>
        <position position="53"/>
    </location>
    <ligand>
        <name>Zn(2+)</name>
        <dbReference type="ChEBI" id="CHEBI:29105"/>
    </ligand>
</feature>
<feature type="binding site">
    <location>
        <begin position="68"/>
        <end position="71"/>
    </location>
    <ligand>
        <name>substrate</name>
    </ligand>
</feature>
<feature type="binding site">
    <location>
        <begin position="90"/>
        <end position="92"/>
    </location>
    <ligand>
        <name>substrate</name>
    </ligand>
</feature>
<feature type="binding site" evidence="2 3">
    <location>
        <position position="134"/>
    </location>
    <ligand>
        <name>Zn(2+)</name>
        <dbReference type="ChEBI" id="CHEBI:29105"/>
    </ligand>
</feature>
<feature type="binding site" evidence="2 3">
    <location>
        <position position="136"/>
    </location>
    <ligand>
        <name>Zn(2+)</name>
        <dbReference type="ChEBI" id="CHEBI:29105"/>
    </ligand>
</feature>
<feature type="binding site" evidence="2 3">
    <location>
        <position position="141"/>
    </location>
    <ligand>
        <name>Zn(2+)</name>
        <dbReference type="ChEBI" id="CHEBI:29105"/>
    </ligand>
</feature>
<feature type="mutagenesis site" description="Loss of phosphatase activity." evidence="2">
    <original>C</original>
    <variation>S</variation>
    <location>
        <position position="86"/>
    </location>
</feature>
<feature type="mutagenesis site" description="No major structural changes." evidence="3">
    <original>C</original>
    <variation>S</variation>
    <location>
        <position position="145"/>
    </location>
</feature>
<feature type="strand" evidence="21">
    <location>
        <begin position="19"/>
        <end position="24"/>
    </location>
</feature>
<feature type="turn" evidence="21">
    <location>
        <begin position="26"/>
        <end position="31"/>
    </location>
</feature>
<feature type="strand" evidence="21">
    <location>
        <begin position="38"/>
        <end position="44"/>
    </location>
</feature>
<feature type="helix" evidence="21">
    <location>
        <begin position="47"/>
        <end position="50"/>
    </location>
</feature>
<feature type="strand" evidence="21">
    <location>
        <begin position="56"/>
        <end position="60"/>
    </location>
</feature>
<feature type="strand" evidence="21">
    <location>
        <begin position="63"/>
        <end position="66"/>
    </location>
</feature>
<feature type="helix" evidence="21">
    <location>
        <begin position="69"/>
        <end position="74"/>
    </location>
</feature>
<feature type="strand" evidence="21">
    <location>
        <begin position="81"/>
        <end position="87"/>
    </location>
</feature>
<feature type="strand" evidence="21">
    <location>
        <begin position="90"/>
        <end position="92"/>
    </location>
</feature>
<feature type="helix" evidence="21">
    <location>
        <begin position="93"/>
        <end position="106"/>
    </location>
</feature>
<feature type="strand" evidence="21">
    <location>
        <begin position="107"/>
        <end position="109"/>
    </location>
</feature>
<feature type="strand" evidence="21">
    <location>
        <begin position="113"/>
        <end position="121"/>
    </location>
</feature>
<feature type="helix" evidence="21">
    <location>
        <begin position="124"/>
        <end position="129"/>
    </location>
</feature>
<dbReference type="EC" id="3.1.3.48" evidence="2"/>
<dbReference type="EC" id="1.20.4.1" evidence="7"/>
<dbReference type="EMBL" id="AL162751">
    <property type="protein sequence ID" value="CAB83305.1"/>
    <property type="status" value="ALT_SEQ"/>
    <property type="molecule type" value="Genomic_DNA"/>
</dbReference>
<dbReference type="EMBL" id="CP002688">
    <property type="protein sequence ID" value="AED90607.1"/>
    <property type="molecule type" value="Genomic_DNA"/>
</dbReference>
<dbReference type="EMBL" id="AK117898">
    <property type="protein sequence ID" value="BAC42537.1"/>
    <property type="molecule type" value="mRNA"/>
</dbReference>
<dbReference type="EMBL" id="BT003658">
    <property type="protein sequence ID" value="AAO39886.1"/>
    <property type="molecule type" value="mRNA"/>
</dbReference>
<dbReference type="EMBL" id="AY086729">
    <property type="protein sequence ID" value="AAM63780.1"/>
    <property type="status" value="ALT_INIT"/>
    <property type="molecule type" value="mRNA"/>
</dbReference>
<dbReference type="PIR" id="T48370">
    <property type="entry name" value="T48370"/>
</dbReference>
<dbReference type="RefSeq" id="NP_568119.1">
    <property type="nucleotide sequence ID" value="NM_120425.3"/>
</dbReference>
<dbReference type="PDB" id="1T3K">
    <property type="method" value="NMR"/>
    <property type="chains" value="A=15-146"/>
</dbReference>
<dbReference type="PDBsum" id="1T3K"/>
<dbReference type="SMR" id="Q8GY31"/>
<dbReference type="BioGRID" id="17108">
    <property type="interactions" value="3"/>
</dbReference>
<dbReference type="FunCoup" id="Q8GY31">
    <property type="interactions" value="419"/>
</dbReference>
<dbReference type="IntAct" id="Q8GY31">
    <property type="interactions" value="3"/>
</dbReference>
<dbReference type="STRING" id="3702.Q8GY31"/>
<dbReference type="PaxDb" id="3702-AT5G03455.1"/>
<dbReference type="ProteomicsDB" id="223970"/>
<dbReference type="EnsemblPlants" id="AT5G03455.1">
    <property type="protein sequence ID" value="AT5G03455.1"/>
    <property type="gene ID" value="AT5G03455"/>
</dbReference>
<dbReference type="GeneID" id="831832"/>
<dbReference type="Gramene" id="AT5G03455.1">
    <property type="protein sequence ID" value="AT5G03455.1"/>
    <property type="gene ID" value="AT5G03455"/>
</dbReference>
<dbReference type="KEGG" id="ath:AT5G03455"/>
<dbReference type="Araport" id="AT5G03455"/>
<dbReference type="TAIR" id="AT5G03455">
    <property type="gene designation" value="CDC25"/>
</dbReference>
<dbReference type="eggNOG" id="KOG3772">
    <property type="taxonomic scope" value="Eukaryota"/>
</dbReference>
<dbReference type="HOGENOM" id="CLU_107716_2_0_1"/>
<dbReference type="InParanoid" id="Q8GY31"/>
<dbReference type="OMA" id="RCTNIPC"/>
<dbReference type="PhylomeDB" id="Q8GY31"/>
<dbReference type="BioCyc" id="ARA:AT5G03455-MONOMER"/>
<dbReference type="SABIO-RK" id="Q8GY31"/>
<dbReference type="EvolutionaryTrace" id="Q8GY31"/>
<dbReference type="PRO" id="PR:Q8GY31"/>
<dbReference type="Proteomes" id="UP000006548">
    <property type="component" value="Chromosome 5"/>
</dbReference>
<dbReference type="ExpressionAtlas" id="Q8GY31">
    <property type="expression patterns" value="baseline and differential"/>
</dbReference>
<dbReference type="GO" id="GO:0009507">
    <property type="term" value="C:chloroplast"/>
    <property type="evidence" value="ECO:0007005"/>
    <property type="project" value="TAIR"/>
</dbReference>
<dbReference type="GO" id="GO:0005739">
    <property type="term" value="C:mitochondrion"/>
    <property type="evidence" value="ECO:0007005"/>
    <property type="project" value="TAIR"/>
</dbReference>
<dbReference type="GO" id="GO:0005634">
    <property type="term" value="C:nucleus"/>
    <property type="evidence" value="ECO:0007669"/>
    <property type="project" value="UniProtKB-SubCell"/>
</dbReference>
<dbReference type="GO" id="GO:0008794">
    <property type="term" value="F:arsenate reductase (glutaredoxin) activity"/>
    <property type="evidence" value="ECO:0007669"/>
    <property type="project" value="UniProtKB-EC"/>
</dbReference>
<dbReference type="GO" id="GO:0046872">
    <property type="term" value="F:metal ion binding"/>
    <property type="evidence" value="ECO:0007669"/>
    <property type="project" value="UniProtKB-KW"/>
</dbReference>
<dbReference type="GO" id="GO:0004725">
    <property type="term" value="F:protein tyrosine phosphatase activity"/>
    <property type="evidence" value="ECO:0000314"/>
    <property type="project" value="TAIR"/>
</dbReference>
<dbReference type="GO" id="GO:0051301">
    <property type="term" value="P:cell division"/>
    <property type="evidence" value="ECO:0007669"/>
    <property type="project" value="UniProtKB-KW"/>
</dbReference>
<dbReference type="GO" id="GO:0006468">
    <property type="term" value="P:protein phosphorylation"/>
    <property type="evidence" value="ECO:0000314"/>
    <property type="project" value="TAIR"/>
</dbReference>
<dbReference type="GO" id="GO:0046685">
    <property type="term" value="P:response to arsenic-containing substance"/>
    <property type="evidence" value="ECO:0000315"/>
    <property type="project" value="TAIR"/>
</dbReference>
<dbReference type="CDD" id="cd01531">
    <property type="entry name" value="Acr2p"/>
    <property type="match status" value="1"/>
</dbReference>
<dbReference type="DisProt" id="DP00916"/>
<dbReference type="FunFam" id="3.40.250.10:FF:000037">
    <property type="entry name" value="Dual-specificity phosphatase CDC25"/>
    <property type="match status" value="1"/>
</dbReference>
<dbReference type="Gene3D" id="3.40.250.10">
    <property type="entry name" value="Rhodanese-like domain"/>
    <property type="match status" value="1"/>
</dbReference>
<dbReference type="InterPro" id="IPR001763">
    <property type="entry name" value="Rhodanese-like_dom"/>
</dbReference>
<dbReference type="InterPro" id="IPR036873">
    <property type="entry name" value="Rhodanese-like_dom_sf"/>
</dbReference>
<dbReference type="PANTHER" id="PTHR10828:SF38">
    <property type="entry name" value="ARSENICAL-RESISTANCE PROTEIN 2-RELATED"/>
    <property type="match status" value="1"/>
</dbReference>
<dbReference type="PANTHER" id="PTHR10828">
    <property type="entry name" value="M-PHASE INDUCER PHOSPHATASE DUAL SPECIFICITY PHOSPHATASE CDC25"/>
    <property type="match status" value="1"/>
</dbReference>
<dbReference type="Pfam" id="PF00581">
    <property type="entry name" value="Rhodanese"/>
    <property type="match status" value="1"/>
</dbReference>
<dbReference type="SMART" id="SM00450">
    <property type="entry name" value="RHOD"/>
    <property type="match status" value="1"/>
</dbReference>
<dbReference type="SUPFAM" id="SSF52821">
    <property type="entry name" value="Rhodanese/Cell cycle control phosphatase"/>
    <property type="match status" value="1"/>
</dbReference>
<dbReference type="PROSITE" id="PS50206">
    <property type="entry name" value="RHODANESE_3"/>
    <property type="match status" value="1"/>
</dbReference>
<reference key="1">
    <citation type="journal article" date="2000" name="Nature">
        <title>Sequence and analysis of chromosome 5 of the plant Arabidopsis thaliana.</title>
        <authorList>
            <person name="Tabata S."/>
            <person name="Kaneko T."/>
            <person name="Nakamura Y."/>
            <person name="Kotani H."/>
            <person name="Kato T."/>
            <person name="Asamizu E."/>
            <person name="Miyajima N."/>
            <person name="Sasamoto S."/>
            <person name="Kimura T."/>
            <person name="Hosouchi T."/>
            <person name="Kawashima K."/>
            <person name="Kohara M."/>
            <person name="Matsumoto M."/>
            <person name="Matsuno A."/>
            <person name="Muraki A."/>
            <person name="Nakayama S."/>
            <person name="Nakazaki N."/>
            <person name="Naruo K."/>
            <person name="Okumura S."/>
            <person name="Shinpo S."/>
            <person name="Takeuchi C."/>
            <person name="Wada T."/>
            <person name="Watanabe A."/>
            <person name="Yamada M."/>
            <person name="Yasuda M."/>
            <person name="Sato S."/>
            <person name="de la Bastide M."/>
            <person name="Huang E."/>
            <person name="Spiegel L."/>
            <person name="Gnoj L."/>
            <person name="O'Shaughnessy A."/>
            <person name="Preston R."/>
            <person name="Habermann K."/>
            <person name="Murray J."/>
            <person name="Johnson D."/>
            <person name="Rohlfing T."/>
            <person name="Nelson J."/>
            <person name="Stoneking T."/>
            <person name="Pepin K."/>
            <person name="Spieth J."/>
            <person name="Sekhon M."/>
            <person name="Armstrong J."/>
            <person name="Becker M."/>
            <person name="Belter E."/>
            <person name="Cordum H."/>
            <person name="Cordes M."/>
            <person name="Courtney L."/>
            <person name="Courtney W."/>
            <person name="Dante M."/>
            <person name="Du H."/>
            <person name="Edwards J."/>
            <person name="Fryman J."/>
            <person name="Haakensen B."/>
            <person name="Lamar E."/>
            <person name="Latreille P."/>
            <person name="Leonard S."/>
            <person name="Meyer R."/>
            <person name="Mulvaney E."/>
            <person name="Ozersky P."/>
            <person name="Riley A."/>
            <person name="Strowmatt C."/>
            <person name="Wagner-McPherson C."/>
            <person name="Wollam A."/>
            <person name="Yoakum M."/>
            <person name="Bell M."/>
            <person name="Dedhia N."/>
            <person name="Parnell L."/>
            <person name="Shah R."/>
            <person name="Rodriguez M."/>
            <person name="Hoon See L."/>
            <person name="Vil D."/>
            <person name="Baker J."/>
            <person name="Kirchoff K."/>
            <person name="Toth K."/>
            <person name="King L."/>
            <person name="Bahret A."/>
            <person name="Miller B."/>
            <person name="Marra M.A."/>
            <person name="Martienssen R."/>
            <person name="McCombie W.R."/>
            <person name="Wilson R.K."/>
            <person name="Murphy G."/>
            <person name="Bancroft I."/>
            <person name="Volckaert G."/>
            <person name="Wambutt R."/>
            <person name="Duesterhoeft A."/>
            <person name="Stiekema W."/>
            <person name="Pohl T."/>
            <person name="Entian K.-D."/>
            <person name="Terryn N."/>
            <person name="Hartley N."/>
            <person name="Bent E."/>
            <person name="Johnson S."/>
            <person name="Langham S.-A."/>
            <person name="McCullagh B."/>
            <person name="Robben J."/>
            <person name="Grymonprez B."/>
            <person name="Zimmermann W."/>
            <person name="Ramsperger U."/>
            <person name="Wedler H."/>
            <person name="Balke K."/>
            <person name="Wedler E."/>
            <person name="Peters S."/>
            <person name="van Staveren M."/>
            <person name="Dirkse W."/>
            <person name="Mooijman P."/>
            <person name="Klein Lankhorst R."/>
            <person name="Weitzenegger T."/>
            <person name="Bothe G."/>
            <person name="Rose M."/>
            <person name="Hauf J."/>
            <person name="Berneiser S."/>
            <person name="Hempel S."/>
            <person name="Feldpausch M."/>
            <person name="Lamberth S."/>
            <person name="Villarroel R."/>
            <person name="Gielen J."/>
            <person name="Ardiles W."/>
            <person name="Bents O."/>
            <person name="Lemcke K."/>
            <person name="Kolesov G."/>
            <person name="Mayer K.F.X."/>
            <person name="Rudd S."/>
            <person name="Schoof H."/>
            <person name="Schueller C."/>
            <person name="Zaccaria P."/>
            <person name="Mewes H.-W."/>
            <person name="Bevan M."/>
            <person name="Fransz P.F."/>
        </authorList>
    </citation>
    <scope>NUCLEOTIDE SEQUENCE [LARGE SCALE GENOMIC DNA]</scope>
    <source>
        <strain>cv. Columbia</strain>
    </source>
</reference>
<reference key="2">
    <citation type="journal article" date="2017" name="Plant J.">
        <title>Araport11: a complete reannotation of the Arabidopsis thaliana reference genome.</title>
        <authorList>
            <person name="Cheng C.Y."/>
            <person name="Krishnakumar V."/>
            <person name="Chan A.P."/>
            <person name="Thibaud-Nissen F."/>
            <person name="Schobel S."/>
            <person name="Town C.D."/>
        </authorList>
    </citation>
    <scope>GENOME REANNOTATION</scope>
    <source>
        <strain>cv. Columbia</strain>
    </source>
</reference>
<reference key="3">
    <citation type="journal article" date="2002" name="Science">
        <title>Functional annotation of a full-length Arabidopsis cDNA collection.</title>
        <authorList>
            <person name="Seki M."/>
            <person name="Narusaka M."/>
            <person name="Kamiya A."/>
            <person name="Ishida J."/>
            <person name="Satou M."/>
            <person name="Sakurai T."/>
            <person name="Nakajima M."/>
            <person name="Enju A."/>
            <person name="Akiyama K."/>
            <person name="Oono Y."/>
            <person name="Muramatsu M."/>
            <person name="Hayashizaki Y."/>
            <person name="Kawai J."/>
            <person name="Carninci P."/>
            <person name="Itoh M."/>
            <person name="Ishii Y."/>
            <person name="Arakawa T."/>
            <person name="Shibata K."/>
            <person name="Shinagawa A."/>
            <person name="Shinozaki K."/>
        </authorList>
    </citation>
    <scope>NUCLEOTIDE SEQUENCE [LARGE SCALE MRNA]</scope>
    <source>
        <strain>cv. Columbia</strain>
    </source>
</reference>
<reference key="4">
    <citation type="journal article" date="2003" name="Science">
        <title>Empirical analysis of transcriptional activity in the Arabidopsis genome.</title>
        <authorList>
            <person name="Yamada K."/>
            <person name="Lim J."/>
            <person name="Dale J.M."/>
            <person name="Chen H."/>
            <person name="Shinn P."/>
            <person name="Palm C.J."/>
            <person name="Southwick A.M."/>
            <person name="Wu H.C."/>
            <person name="Kim C.J."/>
            <person name="Nguyen M."/>
            <person name="Pham P.K."/>
            <person name="Cheuk R.F."/>
            <person name="Karlin-Newmann G."/>
            <person name="Liu S.X."/>
            <person name="Lam B."/>
            <person name="Sakano H."/>
            <person name="Wu T."/>
            <person name="Yu G."/>
            <person name="Miranda M."/>
            <person name="Quach H.L."/>
            <person name="Tripp M."/>
            <person name="Chang C.H."/>
            <person name="Lee J.M."/>
            <person name="Toriumi M.J."/>
            <person name="Chan M.M."/>
            <person name="Tang C.C."/>
            <person name="Onodera C.S."/>
            <person name="Deng J.M."/>
            <person name="Akiyama K."/>
            <person name="Ansari Y."/>
            <person name="Arakawa T."/>
            <person name="Banh J."/>
            <person name="Banno F."/>
            <person name="Bowser L."/>
            <person name="Brooks S.Y."/>
            <person name="Carninci P."/>
            <person name="Chao Q."/>
            <person name="Choy N."/>
            <person name="Enju A."/>
            <person name="Goldsmith A.D."/>
            <person name="Gurjal M."/>
            <person name="Hansen N.F."/>
            <person name="Hayashizaki Y."/>
            <person name="Johnson-Hopson C."/>
            <person name="Hsuan V.W."/>
            <person name="Iida K."/>
            <person name="Karnes M."/>
            <person name="Khan S."/>
            <person name="Koesema E."/>
            <person name="Ishida J."/>
            <person name="Jiang P.X."/>
            <person name="Jones T."/>
            <person name="Kawai J."/>
            <person name="Kamiya A."/>
            <person name="Meyers C."/>
            <person name="Nakajima M."/>
            <person name="Narusaka M."/>
            <person name="Seki M."/>
            <person name="Sakurai T."/>
            <person name="Satou M."/>
            <person name="Tamse R."/>
            <person name="Vaysberg M."/>
            <person name="Wallender E.K."/>
            <person name="Wong C."/>
            <person name="Yamamura Y."/>
            <person name="Yuan S."/>
            <person name="Shinozaki K."/>
            <person name="Davis R.W."/>
            <person name="Theologis A."/>
            <person name="Ecker J.R."/>
        </authorList>
    </citation>
    <scope>NUCLEOTIDE SEQUENCE [LARGE SCALE MRNA]</scope>
    <source>
        <strain>cv. Columbia</strain>
    </source>
</reference>
<reference key="5">
    <citation type="submission" date="2002-03" db="EMBL/GenBank/DDBJ databases">
        <title>Full-length cDNA from Arabidopsis thaliana.</title>
        <authorList>
            <person name="Brover V.V."/>
            <person name="Troukhan M.E."/>
            <person name="Alexandrov N.A."/>
            <person name="Lu Y.-P."/>
            <person name="Flavell R.B."/>
            <person name="Feldmann K.A."/>
        </authorList>
    </citation>
    <scope>NUCLEOTIDE SEQUENCE [LARGE SCALE MRNA]</scope>
</reference>
<reference key="6">
    <citation type="journal article" date="2005" name="New Phytol.">
        <title>The Arabidopsis CDC25 induces a short cell length when overexpressed in fission yeast: evidence for cell cycle function.</title>
        <authorList>
            <person name="Sorrell D.A."/>
            <person name="Chrimes D."/>
            <person name="Dickinson J.R."/>
            <person name="Rogers H.J."/>
            <person name="Francis D."/>
        </authorList>
    </citation>
    <scope>TISSUE SPECIFICITY</scope>
</reference>
<reference key="7">
    <citation type="journal article" date="2006" name="Plant J.">
        <title>Enhanced arsenate reduction by a CDC25-like tyrosine phosphatase explains increased phytochelatin accumulation in arsenate-tolerant Holcus lanatus.</title>
        <authorList>
            <person name="Bleeker P.M."/>
            <person name="Hakvoort H.W."/>
            <person name="Bliek M."/>
            <person name="Souer E."/>
            <person name="Schat H."/>
        </authorList>
    </citation>
    <scope>FUNCTION</scope>
    <scope>DISRUPTION PHENOTYPE</scope>
</reference>
<reference key="8">
    <citation type="journal article" date="2006" name="Plant Physiol.">
        <title>A novel arsenate reductase from the arsenic hyperaccumulating fern Pteris vittata.</title>
        <authorList>
            <person name="Ellis D.R."/>
            <person name="Gumaelius L."/>
            <person name="Indriolo E."/>
            <person name="Pickering I.J."/>
            <person name="Banks J.A."/>
            <person name="Salt D.E."/>
        </authorList>
    </citation>
    <scope>FUNCTION</scope>
    <scope>CATALYTIC ACTIVITY</scope>
</reference>
<reference key="9">
    <citation type="journal article" date="2006" name="Proc. Natl. Acad. Sci. U.S.A.">
        <title>Hyperaccumulation of arsenic in the shoots of Arabidopsis silenced for arsenate reductase (ACR2).</title>
        <authorList>
            <person name="Dhankher O.P."/>
            <person name="Rosen B.P."/>
            <person name="McKinney E.C."/>
            <person name="Meagher R.B."/>
        </authorList>
    </citation>
    <scope>FUNCTION</scope>
    <scope>TISSUE SPECIFICITY</scope>
</reference>
<reference key="10">
    <citation type="journal article" date="2007" name="Plant Physiol. Biochem.">
        <title>Differential expression of Arabidopsis sulfurtransferases under various growth conditions.</title>
        <authorList>
            <person name="Bartels A."/>
            <person name="Mock H.P."/>
            <person name="Papenbrock J."/>
        </authorList>
    </citation>
    <scope>GENE FAMILY</scope>
</reference>
<reference key="11">
    <citation type="journal article" date="2011" name="Ann. Bot.">
        <title>Arabidopsis T-DNA insertional lines for CDC25 are hypersensitive to hydroxyurea but not to zeocin or salt stress.</title>
        <authorList>
            <person name="Spadafora N.D."/>
            <person name="Doonan J.H."/>
            <person name="Herbert R.J."/>
            <person name="Bitonti M.B."/>
            <person name="Wallace E."/>
            <person name="Rogers H.J."/>
            <person name="Francis D."/>
        </authorList>
    </citation>
    <scope>DISRUPTION PHENOTYPE</scope>
</reference>
<reference key="12">
    <citation type="journal article" date="2012" name="J. Mol. Model.">
        <title>In silico and in vivo studies of an Arabidopsis thaliana gene, ACR2, putatively involved in arsenic accumulation in plants.</title>
        <authorList>
            <person name="Nahar N."/>
            <person name="Rahman A."/>
            <person name="Mos M."/>
            <person name="Warzecha T."/>
            <person name="Algerin M."/>
            <person name="Ghosh S."/>
            <person name="Johnson-Brousseau S."/>
            <person name="Mandal A."/>
        </authorList>
    </citation>
    <scope>3D-STRUCTURE MODELING</scope>
    <scope>FUNCTION</scope>
</reference>
<reference key="13">
    <citation type="journal article" date="2012" name="PLoS ONE">
        <title>Knocking out ACR2 does not affect arsenic redox status in Arabidopsis thaliana: implications for as detoxification and accumulation in plants.</title>
        <authorList>
            <person name="Liu W."/>
            <person name="Schat H."/>
            <person name="Bliek M."/>
            <person name="Chen Y."/>
            <person name="McGrath S.P."/>
            <person name="George G."/>
            <person name="Salt D.E."/>
            <person name="Zhao F.J."/>
        </authorList>
    </citation>
    <scope>FUNCTION</scope>
    <scope>DISRUPTION PHENOTYPE</scope>
    <scope>TISSUE SPECIFICITY</scope>
</reference>
<reference key="14">
    <citation type="journal article" date="2014" name="Nat. Commun.">
        <title>Natural variation in arsenate tolerance identifies an arsenate reductase in Arabidopsis thaliana.</title>
        <authorList>
            <person name="Sanchez-Bermejo E."/>
            <person name="Castrillo G."/>
            <person name="del Llano B."/>
            <person name="Navarro C."/>
            <person name="Zarco-Fernandez S."/>
            <person name="Martinez-Herrera D.J."/>
            <person name="Leo-del Puerto Y."/>
            <person name="Munoz R."/>
            <person name="Camara C."/>
            <person name="Paz-Ares J."/>
            <person name="Alonso-Blanco C."/>
            <person name="Leyva A."/>
        </authorList>
    </citation>
    <scope>DISRUPTION PHENOTYPE</scope>
</reference>
<reference key="15">
    <citation type="journal article" date="2014" name="PLoS Biol.">
        <title>Genome-wide association mapping identifies a new arsenate reductase enzyme critical for limiting arsenic accumulation in plants.</title>
        <authorList>
            <person name="Chao D.Y."/>
            <person name="Chen Y."/>
            <person name="Chen J."/>
            <person name="Shi S."/>
            <person name="Chen Z."/>
            <person name="Wang C."/>
            <person name="Danku J.M."/>
            <person name="Zhao F.J."/>
            <person name="Salt D.E."/>
        </authorList>
    </citation>
    <scope>FUNCTION</scope>
    <scope>DISRUPTION PHENOTYPE</scope>
</reference>
<reference key="16">
    <citation type="journal article" date="2004" name="Biochem. Biophys. Res. Commun.">
        <title>Characterization of the Arabidopsis thaliana Arath;CDC25 dual-specificity tyrosine phosphatase.</title>
        <authorList>
            <person name="Landrieu I."/>
            <person name="Hassan S."/>
            <person name="Sauty M."/>
            <person name="Dewitte F."/>
            <person name="Wieruszeski J.-M."/>
            <person name="Inze D."/>
            <person name="de Veylder L."/>
            <person name="Lippens G."/>
        </authorList>
    </citation>
    <scope>STRUCTURE BY NMR OF 15-146 OF CYS-145 IN COMPLEX WITH ZINC</scope>
    <scope>BIOPHYSICOCHEMICAL PROPERTIES</scope>
    <scope>MUTAGENESIS OF CYS-145</scope>
</reference>
<reference key="17">
    <citation type="journal article" date="2004" name="Proc. Natl. Acad. Sci. U.S.A.">
        <title>A small CDC25 dual-specificity tyrosine-phosphatase isoform in Arabidopsis thaliana.</title>
        <authorList>
            <person name="Landrieu I."/>
            <person name="da Costa M."/>
            <person name="de Veylder L."/>
            <person name="Dewitte F."/>
            <person name="Vandepoele K."/>
            <person name="Hassan S."/>
            <person name="Wieruszeski J.-M."/>
            <person name="Corellou F."/>
            <person name="Faure J.-D."/>
            <person name="Van Montagu M."/>
            <person name="Inze D."/>
            <person name="Lippens G."/>
        </authorList>
    </citation>
    <scope>STRUCTURE BY NMR OF 15-146 OF CYS-86 MUTANT IN COMPLEX WITH ZINC</scope>
    <scope>FUNCTION</scope>
    <scope>CATALYTIC ACTIVITY</scope>
    <scope>ACTIVITY REGULATION</scope>
    <scope>BIOPHYSICOCHEMICAL PROPERTIES</scope>
    <scope>MUTAGENESIS OF CYS-86</scope>
</reference>
<reference key="18">
    <citation type="journal article" date="2004" name="Proc. Natl. Acad. Sci. U.S.A.">
        <authorList>
            <person name="Landrieu I."/>
            <person name="da Costa M."/>
            <person name="de Veylder L."/>
            <person name="Dewitte F."/>
            <person name="Vandepoele K."/>
            <person name="Hassan S."/>
            <person name="Wieruszeski J.M."/>
            <person name="Corellou F."/>
            <person name="Faure J.D."/>
            <person name="Van Montagu M."/>
            <person name="Inze D."/>
            <person name="Lippens G."/>
        </authorList>
    </citation>
    <scope>ERRATUM OF PUBMED:15329414</scope>
</reference>
<evidence type="ECO:0000255" key="1">
    <source>
        <dbReference type="PROSITE-ProRule" id="PRU00173"/>
    </source>
</evidence>
<evidence type="ECO:0000269" key="2">
    <source>
    </source>
</evidence>
<evidence type="ECO:0000269" key="3">
    <source>
    </source>
</evidence>
<evidence type="ECO:0000269" key="4">
    <source>
    </source>
</evidence>
<evidence type="ECO:0000269" key="5">
    <source>
    </source>
</evidence>
<evidence type="ECO:0000269" key="6">
    <source>
    </source>
</evidence>
<evidence type="ECO:0000269" key="7">
    <source>
    </source>
</evidence>
<evidence type="ECO:0000269" key="8">
    <source>
    </source>
</evidence>
<evidence type="ECO:0000269" key="9">
    <source>
    </source>
</evidence>
<evidence type="ECO:0000269" key="10">
    <source>
    </source>
</evidence>
<evidence type="ECO:0000269" key="11">
    <source>
    </source>
</evidence>
<evidence type="ECO:0000303" key="12">
    <source>
    </source>
</evidence>
<evidence type="ECO:0000303" key="13">
    <source>
    </source>
</evidence>
<evidence type="ECO:0000303" key="14">
    <source>
    </source>
</evidence>
<evidence type="ECO:0000303" key="15">
    <source>
    </source>
</evidence>
<evidence type="ECO:0000305" key="16"/>
<evidence type="ECO:0000305" key="17">
    <source>
    </source>
</evidence>
<evidence type="ECO:0000305" key="18">
    <source>
    </source>
</evidence>
<evidence type="ECO:0000312" key="19">
    <source>
        <dbReference type="Araport" id="AT5G03455"/>
    </source>
</evidence>
<evidence type="ECO:0000312" key="20">
    <source>
        <dbReference type="EMBL" id="CAB83305.1"/>
    </source>
</evidence>
<evidence type="ECO:0007829" key="21">
    <source>
        <dbReference type="PDB" id="1T3K"/>
    </source>
</evidence>
<comment type="function">
    <text evidence="2 7">Tyrosine protein phosphatase that dephosphorylates CDK complex and activate its kinase activity in vitro.</text>
</comment>
<comment type="function">
    <text evidence="5 6 7 9 11">Arsenate reductase that plays a major role in the reduction of arsenate to arsenite and arsenic retention in roots (PubMed:16567632). Has an in vitro and in vivo arsenate reductase activity (PubMed:16507083, PubMed:16766666, PubMed:22562211). Plays no role in arsenic metabolism (PubMed:22879969, PubMed:25464340).</text>
</comment>
<comment type="catalytic activity">
    <reaction evidence="2">
        <text>O-phospho-L-tyrosyl-[protein] + H2O = L-tyrosyl-[protein] + phosphate</text>
        <dbReference type="Rhea" id="RHEA:10684"/>
        <dbReference type="Rhea" id="RHEA-COMP:10136"/>
        <dbReference type="Rhea" id="RHEA-COMP:20101"/>
        <dbReference type="ChEBI" id="CHEBI:15377"/>
        <dbReference type="ChEBI" id="CHEBI:43474"/>
        <dbReference type="ChEBI" id="CHEBI:46858"/>
        <dbReference type="ChEBI" id="CHEBI:61978"/>
        <dbReference type="EC" id="3.1.3.48"/>
    </reaction>
</comment>
<comment type="catalytic activity">
    <reaction evidence="7">
        <text>[glutaredoxin]-dithiol + arsenate + glutathione + H(+) = glutathionyl-S-S-[glutaredoxin] + arsenite + H2O</text>
        <dbReference type="Rhea" id="RHEA:22016"/>
        <dbReference type="Rhea" id="RHEA-COMP:10729"/>
        <dbReference type="Rhea" id="RHEA-COMP:17668"/>
        <dbReference type="ChEBI" id="CHEBI:15377"/>
        <dbReference type="ChEBI" id="CHEBI:15378"/>
        <dbReference type="ChEBI" id="CHEBI:29242"/>
        <dbReference type="ChEBI" id="CHEBI:29950"/>
        <dbReference type="ChEBI" id="CHEBI:48597"/>
        <dbReference type="ChEBI" id="CHEBI:57925"/>
        <dbReference type="ChEBI" id="CHEBI:146199"/>
        <dbReference type="EC" id="1.20.4.1"/>
    </reaction>
</comment>
<comment type="activity regulation">
    <text evidence="2">Inhibited by NSC95397.</text>
</comment>
<comment type="biophysicochemical properties">
    <kinetics>
        <KM evidence="2 3">50 mM for para-nitrophenyl phosphate</KM>
    </kinetics>
</comment>
<comment type="subcellular location">
    <subcellularLocation>
        <location evidence="16">Nucleus</location>
    </subcellularLocation>
</comment>
<comment type="tissue specificity">
    <text evidence="4 6 9">Expressed in roots and at lower levels in shoots (at protein level). Expressed in leaves, stems and flowers.</text>
</comment>
<comment type="disruption phenotype">
    <text evidence="5 8 9 10 11">No visible phenotype under normal growth conditions, but plants show reduced root size when grown in presence of hydroxyurea (PubMed:20647223). No visible phenotype, but decreased accumulation of total arsenic in shoots (PubMed:16507083). No effect on arsenate sensitivity (PubMed:25099865). No effect on the accumulation of arsenate in roots, efflux of arsenite or uptake of arsenate, or the total arsenic accumulation in shoots (PubMed:22879969, PubMed:25464340).</text>
</comment>
<comment type="miscellaneous">
    <text evidence="17 18">Binds 1 zinc ion which is not required for enzyme activity (PubMed:15329414). Plants silencing ACR2 show increased sensitivity to arsenate but not arsenite (PubMed:16567632).</text>
</comment>
<comment type="similarity">
    <text evidence="16">Belongs to the MPI phosphatase family.</text>
</comment>
<comment type="sequence caution" evidence="16">
    <conflict type="erroneous initiation">
        <sequence resource="EMBL-CDS" id="AAM63780"/>
    </conflict>
    <text>Truncated N-terminus.</text>
</comment>
<comment type="sequence caution" evidence="16">
    <conflict type="erroneous gene model prediction">
        <sequence resource="EMBL-CDS" id="CAB83305"/>
    </conflict>
</comment>
<keyword id="KW-0002">3D-structure</keyword>
<keyword id="KW-0131">Cell cycle</keyword>
<keyword id="KW-0132">Cell division</keyword>
<keyword id="KW-0378">Hydrolase</keyword>
<keyword id="KW-0479">Metal-binding</keyword>
<keyword id="KW-0498">Mitosis</keyword>
<keyword id="KW-0539">Nucleus</keyword>
<keyword id="KW-0560">Oxidoreductase</keyword>
<keyword id="KW-0904">Protein phosphatase</keyword>
<keyword id="KW-1185">Reference proteome</keyword>
<keyword id="KW-0862">Zinc</keyword>
<accession>Q8GY31</accession>
<accession>Q8LC90</accession>
<accession>Q9LZE1</accession>
<protein>
    <recommendedName>
        <fullName evidence="12">Dual specificity phosphatase Cdc25</fullName>
        <ecNumber evidence="2">3.1.3.48</ecNumber>
    </recommendedName>
    <alternativeName>
        <fullName evidence="12">Arath;CDC25</fullName>
    </alternativeName>
    <alternativeName>
        <fullName evidence="13">Arsenate reductase</fullName>
        <shortName evidence="13">AtASR</shortName>
    </alternativeName>
    <alternativeName>
        <fullName evidence="14">Arsenate reductase 2</fullName>
        <ecNumber evidence="7">1.20.4.1</ecNumber>
    </alternativeName>
    <alternativeName>
        <fullName evidence="15">Sulfurtransferase 5</fullName>
        <shortName evidence="15">AtStr5</shortName>
    </alternativeName>
</protein>
<name>CDC25_ARATH</name>
<gene>
    <name evidence="12" type="primary">CDC25</name>
    <name evidence="14" type="synonym">ACR2</name>
    <name evidence="13" type="synonym">ASR</name>
    <name evidence="15" type="synonym">STR5</name>
    <name evidence="19" type="ordered locus">At5g03455</name>
    <name evidence="20" type="ORF">F12E4_220</name>
</gene>